<dbReference type="EC" id="3.4.21.-"/>
<dbReference type="EMBL" id="AF227154">
    <property type="protein sequence ID" value="AAL77227.1"/>
    <property type="molecule type" value="mRNA"/>
</dbReference>
<dbReference type="PIR" id="A20596">
    <property type="entry name" value="A20596"/>
</dbReference>
<dbReference type="SMR" id="Q8QHK2"/>
<dbReference type="MEROPS" id="S01.023"/>
<dbReference type="GO" id="GO:0005576">
    <property type="term" value="C:extracellular region"/>
    <property type="evidence" value="ECO:0007669"/>
    <property type="project" value="UniProtKB-SubCell"/>
</dbReference>
<dbReference type="GO" id="GO:0030141">
    <property type="term" value="C:secretory granule"/>
    <property type="evidence" value="ECO:0007669"/>
    <property type="project" value="TreeGrafter"/>
</dbReference>
<dbReference type="GO" id="GO:0004252">
    <property type="term" value="F:serine-type endopeptidase activity"/>
    <property type="evidence" value="ECO:0007669"/>
    <property type="project" value="InterPro"/>
</dbReference>
<dbReference type="GO" id="GO:0090729">
    <property type="term" value="F:toxin activity"/>
    <property type="evidence" value="ECO:0007669"/>
    <property type="project" value="UniProtKB-KW"/>
</dbReference>
<dbReference type="GO" id="GO:0006508">
    <property type="term" value="P:proteolysis"/>
    <property type="evidence" value="ECO:0007669"/>
    <property type="project" value="UniProtKB-KW"/>
</dbReference>
<dbReference type="CDD" id="cd00190">
    <property type="entry name" value="Tryp_SPc"/>
    <property type="match status" value="1"/>
</dbReference>
<dbReference type="FunFam" id="2.40.10.10:FF:000158">
    <property type="entry name" value="Thrombin-like enzyme saxthrombin"/>
    <property type="match status" value="1"/>
</dbReference>
<dbReference type="FunFam" id="2.40.10.10:FF:000153">
    <property type="entry name" value="Venom plasminogen activator TSV-PA"/>
    <property type="match status" value="1"/>
</dbReference>
<dbReference type="Gene3D" id="2.40.10.10">
    <property type="entry name" value="Trypsin-like serine proteases"/>
    <property type="match status" value="2"/>
</dbReference>
<dbReference type="InterPro" id="IPR009003">
    <property type="entry name" value="Peptidase_S1_PA"/>
</dbReference>
<dbReference type="InterPro" id="IPR043504">
    <property type="entry name" value="Peptidase_S1_PA_chymotrypsin"/>
</dbReference>
<dbReference type="InterPro" id="IPR001314">
    <property type="entry name" value="Peptidase_S1A"/>
</dbReference>
<dbReference type="InterPro" id="IPR001254">
    <property type="entry name" value="Trypsin_dom"/>
</dbReference>
<dbReference type="InterPro" id="IPR018114">
    <property type="entry name" value="TRYPSIN_HIS"/>
</dbReference>
<dbReference type="InterPro" id="IPR033116">
    <property type="entry name" value="TRYPSIN_SER"/>
</dbReference>
<dbReference type="PANTHER" id="PTHR24271:SF47">
    <property type="entry name" value="KALLIKREIN-1"/>
    <property type="match status" value="1"/>
</dbReference>
<dbReference type="PANTHER" id="PTHR24271">
    <property type="entry name" value="KALLIKREIN-RELATED"/>
    <property type="match status" value="1"/>
</dbReference>
<dbReference type="Pfam" id="PF00089">
    <property type="entry name" value="Trypsin"/>
    <property type="match status" value="1"/>
</dbReference>
<dbReference type="PRINTS" id="PR00722">
    <property type="entry name" value="CHYMOTRYPSIN"/>
</dbReference>
<dbReference type="SMART" id="SM00020">
    <property type="entry name" value="Tryp_SPc"/>
    <property type="match status" value="1"/>
</dbReference>
<dbReference type="SUPFAM" id="SSF50494">
    <property type="entry name" value="Trypsin-like serine proteases"/>
    <property type="match status" value="1"/>
</dbReference>
<dbReference type="PROSITE" id="PS50240">
    <property type="entry name" value="TRYPSIN_DOM"/>
    <property type="match status" value="1"/>
</dbReference>
<dbReference type="PROSITE" id="PS00134">
    <property type="entry name" value="TRYPSIN_HIS"/>
    <property type="match status" value="1"/>
</dbReference>
<dbReference type="PROSITE" id="PS00135">
    <property type="entry name" value="TRYPSIN_SER"/>
    <property type="match status" value="1"/>
</dbReference>
<keyword id="KW-0903">Direct protein sequencing</keyword>
<keyword id="KW-1015">Disulfide bond</keyword>
<keyword id="KW-0325">Glycoprotein</keyword>
<keyword id="KW-1199">Hemostasis impairing toxin</keyword>
<keyword id="KW-0378">Hydrolase</keyword>
<keyword id="KW-0645">Protease</keyword>
<keyword id="KW-0964">Secreted</keyword>
<keyword id="KW-0720">Serine protease</keyword>
<keyword id="KW-0732">Signal</keyword>
<keyword id="KW-0800">Toxin</keyword>
<keyword id="KW-0865">Zymogen</keyword>
<protein>
    <recommendedName>
        <fullName>Snake venom serine protease catroxase-2</fullName>
        <shortName>SVSP</shortName>
        <ecNumber>3.4.21.-</ecNumber>
    </recommendedName>
    <alternativeName>
        <fullName>Catroxase II</fullName>
    </alternativeName>
    <alternativeName>
        <fullName>Kallikrein-like EI</fullName>
    </alternativeName>
</protein>
<reference key="1">
    <citation type="submission" date="2000-01" db="EMBL/GenBank/DDBJ databases">
        <title>Catroxase I and II, the serine proteases of Crotalus atrox venom: cloning, complete sequencing and functional characterization.</title>
        <authorList>
            <person name="Tsai I.-H."/>
            <person name="Hsu J.-C."/>
            <person name="Wang Y.-M."/>
        </authorList>
    </citation>
    <scope>NUCLEOTIDE SEQUENCE [MRNA]</scope>
    <source>
        <tissue>Venom gland</tissue>
    </source>
</reference>
<reference key="2">
    <citation type="journal article" date="1983" name="J. Biol. Chem.">
        <title>Kallikrein-like enzymes from Crotalus atrox venom.</title>
        <authorList>
            <person name="Bjarnason J.B."/>
            <person name="Barish A."/>
            <person name="Direnzo G.S."/>
            <person name="Campbell R."/>
            <person name="Fox J.W."/>
        </authorList>
    </citation>
    <scope>PROTEIN SEQUENCE OF 25-49</scope>
    <source>
        <tissue>Venom</tissue>
    </source>
</reference>
<reference key="3">
    <citation type="journal article" date="2009" name="J. Proteome Res.">
        <title>Exploring the venom proteome of the western diamondback rattlesnake, Crotalus atrox, via snake venomics and combinatorial peptide ligand library approaches.</title>
        <authorList>
            <person name="Calvete J.J."/>
            <person name="Fasoli E."/>
            <person name="Sanz L."/>
            <person name="Boschetti E."/>
            <person name="Righetti P.G."/>
        </authorList>
    </citation>
    <scope>PROTEIN SEQUENCE OF 25-39; 82-90 AND 187-197</scope>
    <scope>IDENTIFICATION BY MASS SPECTROMETRY</scope>
    <source>
        <tissue>Venom</tissue>
    </source>
</reference>
<organism>
    <name type="scientific">Crotalus atrox</name>
    <name type="common">Western diamondback rattlesnake</name>
    <dbReference type="NCBI Taxonomy" id="8730"/>
    <lineage>
        <taxon>Eukaryota</taxon>
        <taxon>Metazoa</taxon>
        <taxon>Chordata</taxon>
        <taxon>Craniata</taxon>
        <taxon>Vertebrata</taxon>
        <taxon>Euteleostomi</taxon>
        <taxon>Lepidosauria</taxon>
        <taxon>Squamata</taxon>
        <taxon>Bifurcata</taxon>
        <taxon>Unidentata</taxon>
        <taxon>Episquamata</taxon>
        <taxon>Toxicofera</taxon>
        <taxon>Serpentes</taxon>
        <taxon>Colubroidea</taxon>
        <taxon>Viperidae</taxon>
        <taxon>Crotalinae</taxon>
        <taxon>Crotalus</taxon>
    </lineage>
</organism>
<accession>Q8QHK2</accession>
<feature type="signal peptide" evidence="2">
    <location>
        <begin position="1"/>
        <end position="18"/>
    </location>
</feature>
<feature type="propeptide" id="PRO_0000296305" evidence="4 5">
    <location>
        <begin position="19"/>
        <end position="24"/>
    </location>
</feature>
<feature type="chain" id="PRO_5000057803" description="Snake venom serine protease catroxase-2">
    <location>
        <begin position="25"/>
        <end position="258"/>
    </location>
</feature>
<feature type="domain" description="Peptidase S1" evidence="3">
    <location>
        <begin position="25"/>
        <end position="249"/>
    </location>
</feature>
<feature type="active site" description="Charge relay system" evidence="1">
    <location>
        <position position="65"/>
    </location>
</feature>
<feature type="active site" description="Charge relay system" evidence="1">
    <location>
        <position position="110"/>
    </location>
</feature>
<feature type="active site" description="Charge relay system" evidence="1">
    <location>
        <position position="204"/>
    </location>
</feature>
<feature type="glycosylation site" description="N-linked (GlcNAc...) asparagine" evidence="2">
    <location>
        <position position="44"/>
    </location>
</feature>
<feature type="disulfide bond" evidence="3">
    <location>
        <begin position="31"/>
        <end position="163"/>
    </location>
</feature>
<feature type="disulfide bond" evidence="3">
    <location>
        <begin position="50"/>
        <end position="66"/>
    </location>
</feature>
<feature type="disulfide bond" evidence="3">
    <location>
        <begin position="98"/>
        <end position="256"/>
    </location>
</feature>
<feature type="disulfide bond" evidence="3">
    <location>
        <begin position="142"/>
        <end position="210"/>
    </location>
</feature>
<feature type="disulfide bond" evidence="3">
    <location>
        <begin position="174"/>
        <end position="189"/>
    </location>
</feature>
<feature type="disulfide bond" evidence="3">
    <location>
        <begin position="200"/>
        <end position="225"/>
    </location>
</feature>
<evidence type="ECO:0000250" key="1"/>
<evidence type="ECO:0000255" key="2"/>
<evidence type="ECO:0000255" key="3">
    <source>
        <dbReference type="PROSITE-ProRule" id="PRU00274"/>
    </source>
</evidence>
<evidence type="ECO:0000269" key="4">
    <source>
    </source>
</evidence>
<evidence type="ECO:0000269" key="5">
    <source>
    </source>
</evidence>
<proteinExistence type="evidence at protein level"/>
<comment type="function">
    <text evidence="1">Snake venom serine protease that may act in the hemostasis system of the prey.</text>
</comment>
<comment type="subunit">
    <text evidence="1">Monomer.</text>
</comment>
<comment type="subcellular location">
    <subcellularLocation>
        <location>Secreted</location>
    </subcellularLocation>
</comment>
<comment type="tissue specificity">
    <text>Expressed by the venom gland.</text>
</comment>
<comment type="similarity">
    <text evidence="3">Belongs to the peptidase S1 family. Snake venom subfamily.</text>
</comment>
<name>VSP2_CROAT</name>
<sequence length="258" mass="27909">MVLIRVLANLLILQLSYAQKSSELVVGGDECNINEHRSLVAIFNSTEFFCSGTLINQEWVVTAAHCDSTNFKMKLGVHSKKVPNEDEQTRNPKEKFFCPNKKKDDVLDKDIMLIKLDSPVSNSEHIAPLSLPSSPPSVGSVCHIMGWGSITPIEKTLPDVPYCANIKLLDDAVCQPPYPELPATSRTLCAGIPEGGKDTCGGDSGGPLICNGQFQGIVFYGAHPCGQALKPGVYTKVFDYNDWIQSIIAGNTAATCPP</sequence>